<sequence>MLFRFLQTLARFCRFLLISVLGFRFSPLLLLGYVKLQDENKHNSESALASGTDAKQPEAAENVTSSSIDFAVNSVVKVFTVYSMPSVLQPWRNWPQQESGGSGFVISGKKILTNAHVVADHIFLQVRKHGSPTKYKAQVRAIGHECDLAILEIDNEEFWEDMIPLELGEIPSLDESVAVFGYPTGGDSVSITKGYVSRVEYTRYAHGGTTLLAIQTDAAINPGNSGGPAIIGNKMAGVAFQKDPSADNIGYIIPTPVIKHFLTAVEENGQYGGFCTLDISYQLMENSQLRNHFKMGPEMTGILINEINPLSDAYKRLRKDDIILAIDDVLIGNDAKVTFRNKERINFNHFVSMKKLDETVLLQVLRDGKEHEFHIMVKPVPPLVPGHQYDKLPSYYIFAGFVFVPLTQPYIDSTLICNCAIKYMPEKAGEQLVLADDINAGYTDFKNLKVIKVNGVQVENLKHLTELVETCWTEDLRLDLENEKVVVLNYANAKEATSLILELHRIPSANEYDYQWQS</sequence>
<accession>Q9SHZ0</accession>
<accession>O04481</accession>
<accession>Q1PFG5</accession>
<reference key="1">
    <citation type="journal article" date="2000" name="Nature">
        <title>Sequence and analysis of chromosome 1 of the plant Arabidopsis thaliana.</title>
        <authorList>
            <person name="Theologis A."/>
            <person name="Ecker J.R."/>
            <person name="Palm C.J."/>
            <person name="Federspiel N.A."/>
            <person name="Kaul S."/>
            <person name="White O."/>
            <person name="Alonso J."/>
            <person name="Altafi H."/>
            <person name="Araujo R."/>
            <person name="Bowman C.L."/>
            <person name="Brooks S.Y."/>
            <person name="Buehler E."/>
            <person name="Chan A."/>
            <person name="Chao Q."/>
            <person name="Chen H."/>
            <person name="Cheuk R.F."/>
            <person name="Chin C.W."/>
            <person name="Chung M.K."/>
            <person name="Conn L."/>
            <person name="Conway A.B."/>
            <person name="Conway A.R."/>
            <person name="Creasy T.H."/>
            <person name="Dewar K."/>
            <person name="Dunn P."/>
            <person name="Etgu P."/>
            <person name="Feldblyum T.V."/>
            <person name="Feng J.-D."/>
            <person name="Fong B."/>
            <person name="Fujii C.Y."/>
            <person name="Gill J.E."/>
            <person name="Goldsmith A.D."/>
            <person name="Haas B."/>
            <person name="Hansen N.F."/>
            <person name="Hughes B."/>
            <person name="Huizar L."/>
            <person name="Hunter J.L."/>
            <person name="Jenkins J."/>
            <person name="Johnson-Hopson C."/>
            <person name="Khan S."/>
            <person name="Khaykin E."/>
            <person name="Kim C.J."/>
            <person name="Koo H.L."/>
            <person name="Kremenetskaia I."/>
            <person name="Kurtz D.B."/>
            <person name="Kwan A."/>
            <person name="Lam B."/>
            <person name="Langin-Hooper S."/>
            <person name="Lee A."/>
            <person name="Lee J.M."/>
            <person name="Lenz C.A."/>
            <person name="Li J.H."/>
            <person name="Li Y.-P."/>
            <person name="Lin X."/>
            <person name="Liu S.X."/>
            <person name="Liu Z.A."/>
            <person name="Luros J.S."/>
            <person name="Maiti R."/>
            <person name="Marziali A."/>
            <person name="Militscher J."/>
            <person name="Miranda M."/>
            <person name="Nguyen M."/>
            <person name="Nierman W.C."/>
            <person name="Osborne B.I."/>
            <person name="Pai G."/>
            <person name="Peterson J."/>
            <person name="Pham P.K."/>
            <person name="Rizzo M."/>
            <person name="Rooney T."/>
            <person name="Rowley D."/>
            <person name="Sakano H."/>
            <person name="Salzberg S.L."/>
            <person name="Schwartz J.R."/>
            <person name="Shinn P."/>
            <person name="Southwick A.M."/>
            <person name="Sun H."/>
            <person name="Tallon L.J."/>
            <person name="Tambunga G."/>
            <person name="Toriumi M.J."/>
            <person name="Town C.D."/>
            <person name="Utterback T."/>
            <person name="Van Aken S."/>
            <person name="Vaysberg M."/>
            <person name="Vysotskaia V.S."/>
            <person name="Walker M."/>
            <person name="Wu D."/>
            <person name="Yu G."/>
            <person name="Fraser C.M."/>
            <person name="Venter J.C."/>
            <person name="Davis R.W."/>
        </authorList>
    </citation>
    <scope>NUCLEOTIDE SEQUENCE [LARGE SCALE GENOMIC DNA]</scope>
    <source>
        <strain>cv. Columbia</strain>
    </source>
</reference>
<reference key="2">
    <citation type="journal article" date="2017" name="Plant J.">
        <title>Araport11: a complete reannotation of the Arabidopsis thaliana reference genome.</title>
        <authorList>
            <person name="Cheng C.Y."/>
            <person name="Krishnakumar V."/>
            <person name="Chan A.P."/>
            <person name="Thibaud-Nissen F."/>
            <person name="Schobel S."/>
            <person name="Town C.D."/>
        </authorList>
    </citation>
    <scope>GENOME REANNOTATION</scope>
    <source>
        <strain>cv. Columbia</strain>
    </source>
</reference>
<reference key="3">
    <citation type="journal article" date="2006" name="Plant Biotechnol. J.">
        <title>Simultaneous high-throughput recombinational cloning of open reading frames in closed and open configurations.</title>
        <authorList>
            <person name="Underwood B.A."/>
            <person name="Vanderhaeghen R."/>
            <person name="Whitford R."/>
            <person name="Town C.D."/>
            <person name="Hilson P."/>
        </authorList>
    </citation>
    <scope>NUCLEOTIDE SEQUENCE [LARGE SCALE MRNA] (ISOFORM 2)</scope>
    <source>
        <strain>cv. Columbia</strain>
    </source>
</reference>
<reference key="4">
    <citation type="journal article" date="2001" name="Plant Physiol.">
        <title>Chloroplast and mitochondrial proteases in Arabidopsis. A proposed nomenclature.</title>
        <authorList>
            <person name="Adam Z."/>
            <person name="Adamska I."/>
            <person name="Nakabayashi K."/>
            <person name="Ostersetzer O."/>
            <person name="Haussuhl K."/>
            <person name="Manuell A."/>
            <person name="Zheng B."/>
            <person name="Vallon O."/>
            <person name="Rodermel S.R."/>
            <person name="Shinozaki K."/>
            <person name="Clarke A.K."/>
        </authorList>
    </citation>
    <scope>GENE FAMILY</scope>
    <scope>NOMENCLATURE</scope>
</reference>
<proteinExistence type="evidence at transcript level"/>
<gene>
    <name type="primary">DEGP4</name>
    <name type="ordered locus">At1g65640</name>
    <name type="ORF">F1E22.2</name>
    <name type="ORF">F5I14.17</name>
</gene>
<comment type="function">
    <text>Putative serine protease.</text>
</comment>
<comment type="subcellular location">
    <subcellularLocation>
        <location evidence="4">Mitochondrion membrane</location>
    </subcellularLocation>
</comment>
<comment type="alternative products">
    <event type="alternative splicing"/>
    <isoform>
        <id>Q9SHZ0-1</id>
        <name>1</name>
        <sequence type="displayed"/>
    </isoform>
    <isoform>
        <id>Q9SHZ0-2</id>
        <name>2</name>
        <sequence type="described" ref="VSP_035497 VSP_035498"/>
    </isoform>
</comment>
<comment type="miscellaneous">
    <molecule>Isoform 2</molecule>
    <text evidence="4">May be due to a competing donor splice site.</text>
</comment>
<comment type="similarity">
    <text evidence="4">Belongs to the peptidase S1C family.</text>
</comment>
<comment type="sequence caution" evidence="4">
    <conflict type="erroneous gene model prediction">
        <sequence resource="EMBL-CDS" id="AAB60913"/>
    </conflict>
</comment>
<name>DEGP4_ARATH</name>
<feature type="transit peptide" description="Mitochondrion" evidence="2">
    <location>
        <begin position="1"/>
        <end position="23"/>
    </location>
</feature>
<feature type="chain" id="PRO_0000045832" description="Protease Do-like 4, mitochondrial">
    <location>
        <begin position="24"/>
        <end position="518"/>
    </location>
</feature>
<feature type="domain" description="PDZ">
    <location>
        <begin position="278"/>
        <end position="358"/>
    </location>
</feature>
<feature type="region of interest" description="Serine protease">
    <location>
        <begin position="98"/>
        <end position="262"/>
    </location>
</feature>
<feature type="active site" description="Charge relay system" evidence="1">
    <location>
        <position position="116"/>
    </location>
</feature>
<feature type="active site" description="Charge relay system" evidence="1">
    <location>
        <position position="147"/>
    </location>
</feature>
<feature type="active site" description="Charge relay system" evidence="1">
    <location>
        <position position="225"/>
    </location>
</feature>
<feature type="splice variant" id="VSP_035497" description="In isoform 2." evidence="3">
    <original>LAD</original>
    <variation>IIS</variation>
    <location>
        <begin position="434"/>
        <end position="436"/>
    </location>
</feature>
<feature type="splice variant" id="VSP_035498" description="In isoform 2." evidence="3">
    <location>
        <begin position="437"/>
        <end position="518"/>
    </location>
</feature>
<feature type="sequence conflict" description="In Ref. 3; ABE65743." evidence="4" ref="3">
    <original>G</original>
    <variation>E</variation>
    <location>
        <position position="301"/>
    </location>
</feature>
<organism>
    <name type="scientific">Arabidopsis thaliana</name>
    <name type="common">Mouse-ear cress</name>
    <dbReference type="NCBI Taxonomy" id="3702"/>
    <lineage>
        <taxon>Eukaryota</taxon>
        <taxon>Viridiplantae</taxon>
        <taxon>Streptophyta</taxon>
        <taxon>Embryophyta</taxon>
        <taxon>Tracheophyta</taxon>
        <taxon>Spermatophyta</taxon>
        <taxon>Magnoliopsida</taxon>
        <taxon>eudicotyledons</taxon>
        <taxon>Gunneridae</taxon>
        <taxon>Pentapetalae</taxon>
        <taxon>rosids</taxon>
        <taxon>malvids</taxon>
        <taxon>Brassicales</taxon>
        <taxon>Brassicaceae</taxon>
        <taxon>Camelineae</taxon>
        <taxon>Arabidopsis</taxon>
    </lineage>
</organism>
<keyword id="KW-0025">Alternative splicing</keyword>
<keyword id="KW-0378">Hydrolase</keyword>
<keyword id="KW-0472">Membrane</keyword>
<keyword id="KW-0496">Mitochondrion</keyword>
<keyword id="KW-0645">Protease</keyword>
<keyword id="KW-1185">Reference proteome</keyword>
<keyword id="KW-0720">Serine protease</keyword>
<keyword id="KW-0809">Transit peptide</keyword>
<dbReference type="EC" id="3.4.21.-"/>
<dbReference type="EMBL" id="AC001229">
    <property type="protein sequence ID" value="AAB60913.1"/>
    <property type="status" value="ALT_SEQ"/>
    <property type="molecule type" value="Genomic_DNA"/>
</dbReference>
<dbReference type="EMBL" id="AC007234">
    <property type="protein sequence ID" value="AAF23846.1"/>
    <property type="molecule type" value="Genomic_DNA"/>
</dbReference>
<dbReference type="EMBL" id="CP002684">
    <property type="protein sequence ID" value="AEE34406.1"/>
    <property type="molecule type" value="Genomic_DNA"/>
</dbReference>
<dbReference type="EMBL" id="CP002684">
    <property type="protein sequence ID" value="ANM60216.1"/>
    <property type="molecule type" value="Genomic_DNA"/>
</dbReference>
<dbReference type="EMBL" id="DQ446398">
    <property type="protein sequence ID" value="ABE65743.1"/>
    <property type="molecule type" value="mRNA"/>
</dbReference>
<dbReference type="PIR" id="D96681">
    <property type="entry name" value="D96681"/>
</dbReference>
<dbReference type="RefSeq" id="NP_001322516.1">
    <molecule id="Q9SHZ0-1"/>
    <property type="nucleotide sequence ID" value="NM_001334218.1"/>
</dbReference>
<dbReference type="RefSeq" id="NP_564857.2">
    <molecule id="Q9SHZ0-2"/>
    <property type="nucleotide sequence ID" value="NM_105237.2"/>
</dbReference>
<dbReference type="SMR" id="Q9SHZ0"/>
<dbReference type="BioGRID" id="28096">
    <property type="interactions" value="1"/>
</dbReference>
<dbReference type="STRING" id="3702.Q9SHZ0"/>
<dbReference type="MEROPS" id="S01.A02"/>
<dbReference type="GlyGen" id="Q9SHZ0">
    <property type="glycosylation" value="1 site"/>
</dbReference>
<dbReference type="PaxDb" id="3702-AT1G65640.1"/>
<dbReference type="EnsemblPlants" id="AT1G65640.1">
    <molecule id="Q9SHZ0-2"/>
    <property type="protein sequence ID" value="AT1G65640.1"/>
    <property type="gene ID" value="AT1G65640"/>
</dbReference>
<dbReference type="EnsemblPlants" id="AT1G65640.2">
    <molecule id="Q9SHZ0-1"/>
    <property type="protein sequence ID" value="AT1G65640.2"/>
    <property type="gene ID" value="AT1G65640"/>
</dbReference>
<dbReference type="GeneID" id="842875"/>
<dbReference type="Gramene" id="AT1G65640.1">
    <molecule id="Q9SHZ0-2"/>
    <property type="protein sequence ID" value="AT1G65640.1"/>
    <property type="gene ID" value="AT1G65640"/>
</dbReference>
<dbReference type="Gramene" id="AT1G65640.2">
    <molecule id="Q9SHZ0-1"/>
    <property type="protein sequence ID" value="AT1G65640.2"/>
    <property type="gene ID" value="AT1G65640"/>
</dbReference>
<dbReference type="KEGG" id="ath:AT1G65640"/>
<dbReference type="Araport" id="AT1G65640"/>
<dbReference type="TAIR" id="AT1G65640">
    <property type="gene designation" value="DEG4"/>
</dbReference>
<dbReference type="eggNOG" id="KOG1320">
    <property type="taxonomic scope" value="Eukaryota"/>
</dbReference>
<dbReference type="HOGENOM" id="CLU_020120_10_2_1"/>
<dbReference type="InParanoid" id="Q9SHZ0"/>
<dbReference type="OMA" id="ICNCANK"/>
<dbReference type="PhylomeDB" id="Q9SHZ0"/>
<dbReference type="PRO" id="PR:Q9SHZ0"/>
<dbReference type="Proteomes" id="UP000006548">
    <property type="component" value="Chromosome 1"/>
</dbReference>
<dbReference type="ExpressionAtlas" id="Q9SHZ0">
    <property type="expression patterns" value="baseline and differential"/>
</dbReference>
<dbReference type="GO" id="GO:0031966">
    <property type="term" value="C:mitochondrial membrane"/>
    <property type="evidence" value="ECO:0007669"/>
    <property type="project" value="UniProtKB-SubCell"/>
</dbReference>
<dbReference type="GO" id="GO:0004252">
    <property type="term" value="F:serine-type endopeptidase activity"/>
    <property type="evidence" value="ECO:0007669"/>
    <property type="project" value="InterPro"/>
</dbReference>
<dbReference type="GO" id="GO:0006508">
    <property type="term" value="P:proteolysis"/>
    <property type="evidence" value="ECO:0007669"/>
    <property type="project" value="UniProtKB-KW"/>
</dbReference>
<dbReference type="Gene3D" id="2.30.42.10">
    <property type="match status" value="1"/>
</dbReference>
<dbReference type="Gene3D" id="3.20.190.20">
    <property type="match status" value="1"/>
</dbReference>
<dbReference type="Gene3D" id="2.40.10.10">
    <property type="entry name" value="Trypsin-like serine proteases"/>
    <property type="match status" value="2"/>
</dbReference>
<dbReference type="InterPro" id="IPR041517">
    <property type="entry name" value="DEGP_PDZ"/>
</dbReference>
<dbReference type="InterPro" id="IPR046449">
    <property type="entry name" value="DEGP_PDZ_sf"/>
</dbReference>
<dbReference type="InterPro" id="IPR036034">
    <property type="entry name" value="PDZ_sf"/>
</dbReference>
<dbReference type="InterPro" id="IPR009003">
    <property type="entry name" value="Peptidase_S1_PA"/>
</dbReference>
<dbReference type="InterPro" id="IPR043504">
    <property type="entry name" value="Peptidase_S1_PA_chymotrypsin"/>
</dbReference>
<dbReference type="InterPro" id="IPR001940">
    <property type="entry name" value="Peptidase_S1C"/>
</dbReference>
<dbReference type="PANTHER" id="PTHR45980">
    <property type="match status" value="1"/>
</dbReference>
<dbReference type="PANTHER" id="PTHR45980:SF9">
    <property type="entry name" value="PROTEASE DO-LIKE 10, MITOCHONDRIAL-RELATED"/>
    <property type="match status" value="1"/>
</dbReference>
<dbReference type="Pfam" id="PF17815">
    <property type="entry name" value="PDZ_3"/>
    <property type="match status" value="1"/>
</dbReference>
<dbReference type="Pfam" id="PF13365">
    <property type="entry name" value="Trypsin_2"/>
    <property type="match status" value="1"/>
</dbReference>
<dbReference type="PRINTS" id="PR00834">
    <property type="entry name" value="PROTEASES2C"/>
</dbReference>
<dbReference type="SUPFAM" id="SSF50156">
    <property type="entry name" value="PDZ domain-like"/>
    <property type="match status" value="1"/>
</dbReference>
<dbReference type="SUPFAM" id="SSF50494">
    <property type="entry name" value="Trypsin-like serine proteases"/>
    <property type="match status" value="1"/>
</dbReference>
<protein>
    <recommendedName>
        <fullName>Protease Do-like 4, mitochondrial</fullName>
        <ecNumber>3.4.21.-</ecNumber>
    </recommendedName>
</protein>
<evidence type="ECO:0000250" key="1"/>
<evidence type="ECO:0000255" key="2"/>
<evidence type="ECO:0000303" key="3">
    <source>
    </source>
</evidence>
<evidence type="ECO:0000305" key="4"/>